<protein>
    <recommendedName>
        <fullName>Envelopment polyprotein</fullName>
    </recommendedName>
    <alternativeName>
        <fullName>M polyprotein</fullName>
    </alternativeName>
    <component>
        <recommendedName>
            <fullName evidence="20">NSm-Gn protein</fullName>
        </recommendedName>
        <alternativeName>
            <fullName>p78</fullName>
        </alternativeName>
    </component>
    <component>
        <recommendedName>
            <fullName evidence="19">Glycoprotein N</fullName>
            <shortName>Gn</shortName>
        </recommendedName>
        <alternativeName>
            <fullName>Glycoprotein G1</fullName>
        </alternativeName>
    </component>
    <component>
        <recommendedName>
            <fullName evidence="19">Glycoprotein C</fullName>
            <shortName>Gc</shortName>
        </recommendedName>
        <alternativeName>
            <fullName>Glycoprotein G2</fullName>
        </alternativeName>
    </component>
</protein>
<keyword id="KW-0002">3D-structure</keyword>
<keyword id="KW-0024">Alternative initiation</keyword>
<keyword id="KW-1015">Disulfide bond</keyword>
<keyword id="KW-1170">Fusion of virus membrane with host endosomal membrane</keyword>
<keyword id="KW-1168">Fusion of virus membrane with host membrane</keyword>
<keyword id="KW-0325">Glycoprotein</keyword>
<keyword id="KW-1038">Host endoplasmic reticulum</keyword>
<keyword id="KW-1040">Host Golgi apparatus</keyword>
<keyword id="KW-1043">Host membrane</keyword>
<keyword id="KW-1045">Host mitochondrion</keyword>
<keyword id="KW-1047">Host mitochondrion outer membrane</keyword>
<keyword id="KW-0945">Host-virus interaction</keyword>
<keyword id="KW-0472">Membrane</keyword>
<keyword id="KW-1119">Modulation of host cell apoptosis by virus</keyword>
<keyword id="KW-1185">Reference proteome</keyword>
<keyword id="KW-0732">Signal</keyword>
<keyword id="KW-0812">Transmembrane</keyword>
<keyword id="KW-1133">Transmembrane helix</keyword>
<keyword id="KW-1161">Viral attachment to host cell</keyword>
<keyword id="KW-1234">Viral attachment to host entry receptor</keyword>
<keyword id="KW-1162">Viral penetration into host cytoplasm</keyword>
<keyword id="KW-0946">Virion</keyword>
<keyword id="KW-1160">Virus entry into host cell</keyword>
<dbReference type="EMBL" id="M25276">
    <property type="protein sequence ID" value="AAA47449.1"/>
    <property type="molecule type" value="Genomic_RNA"/>
</dbReference>
<dbReference type="EMBL" id="DQ380206">
    <property type="protein sequence ID" value="ABD38819.1"/>
    <property type="molecule type" value="Genomic_RNA"/>
</dbReference>
<dbReference type="PIR" id="A30183">
    <property type="entry name" value="VGVURF"/>
</dbReference>
<dbReference type="RefSeq" id="YP_003848705.1">
    <property type="nucleotide sequence ID" value="NC_014396.1"/>
</dbReference>
<dbReference type="PDB" id="6F8P">
    <property type="method" value="X-ray"/>
    <property type="resolution" value="1.60 A"/>
    <property type="chains" value="A=154-469"/>
</dbReference>
<dbReference type="PDB" id="6F9B">
    <property type="method" value="EM"/>
    <property type="resolution" value="13.30 A"/>
    <property type="chains" value="A/C/E/G/I/K/M/O/Q/S/U/X=154-469, B/D/F/H/J/L/N/P/R/T/V/Y=691-1118"/>
</dbReference>
<dbReference type="PDB" id="6F9C">
    <property type="method" value="EM"/>
    <property type="resolution" value="8.00 A"/>
    <property type="chains" value="A/C/E/G/I/K=154-469, B/D/F/H/J/L=691-1118"/>
</dbReference>
<dbReference type="PDB" id="6F9D">
    <property type="method" value="EM"/>
    <property type="resolution" value="13.30 A"/>
    <property type="chains" value="A/C/E/G/I/K=154-469, B/D/F/H/J/L=691-1118"/>
</dbReference>
<dbReference type="PDB" id="6F9E">
    <property type="method" value="EM"/>
    <property type="resolution" value="13.30 A"/>
    <property type="chains" value="A/C/E/G/I/K=154-469, B/D/F/H/J/L=691-1118"/>
</dbReference>
<dbReference type="PDB" id="6F9F">
    <property type="method" value="EM"/>
    <property type="resolution" value="13.30 A"/>
    <property type="chains" value="A/C/E/G/I=154-469, B/D/F/H/J=691-1118"/>
</dbReference>
<dbReference type="PDB" id="6I9I">
    <property type="method" value="X-ray"/>
    <property type="resolution" value="1.98 A"/>
    <property type="chains" value="C/D=154-469"/>
</dbReference>
<dbReference type="PDBsum" id="6F8P"/>
<dbReference type="PDBsum" id="6F9B"/>
<dbReference type="PDBsum" id="6F9C"/>
<dbReference type="PDBsum" id="6F9D"/>
<dbReference type="PDBsum" id="6F9E"/>
<dbReference type="PDBsum" id="6F9F"/>
<dbReference type="PDBsum" id="6I9I"/>
<dbReference type="SMR" id="P21401"/>
<dbReference type="GlyCosmos" id="P21401">
    <property type="glycosylation" value="3 sites, No reported glycans"/>
</dbReference>
<dbReference type="ABCD" id="P21401">
    <property type="antibodies" value="3 sequenced antibodies"/>
</dbReference>
<dbReference type="KEGG" id="vg:9538296"/>
<dbReference type="Proteomes" id="UP000002477">
    <property type="component" value="Genome"/>
</dbReference>
<dbReference type="Proteomes" id="UP000202138">
    <property type="component" value="Genome"/>
</dbReference>
<dbReference type="GO" id="GO:0044167">
    <property type="term" value="C:host cell endoplasmic reticulum membrane"/>
    <property type="evidence" value="ECO:0007669"/>
    <property type="project" value="UniProtKB-SubCell"/>
</dbReference>
<dbReference type="GO" id="GO:0044178">
    <property type="term" value="C:host cell Golgi membrane"/>
    <property type="evidence" value="ECO:0007669"/>
    <property type="project" value="UniProtKB-SubCell"/>
</dbReference>
<dbReference type="GO" id="GO:0044193">
    <property type="term" value="C:host cell mitochondrial outer membrane"/>
    <property type="evidence" value="ECO:0000314"/>
    <property type="project" value="UniProtKB"/>
</dbReference>
<dbReference type="GO" id="GO:0016020">
    <property type="term" value="C:membrane"/>
    <property type="evidence" value="ECO:0007669"/>
    <property type="project" value="UniProtKB-KW"/>
</dbReference>
<dbReference type="GO" id="GO:0055036">
    <property type="term" value="C:virion membrane"/>
    <property type="evidence" value="ECO:0007669"/>
    <property type="project" value="UniProtKB-SubCell"/>
</dbReference>
<dbReference type="GO" id="GO:0098670">
    <property type="term" value="P:entry receptor-mediated virion attachment to host cell"/>
    <property type="evidence" value="ECO:0007669"/>
    <property type="project" value="UniProtKB-KW"/>
</dbReference>
<dbReference type="GO" id="GO:0039654">
    <property type="term" value="P:fusion of virus membrane with host endosome membrane"/>
    <property type="evidence" value="ECO:0007669"/>
    <property type="project" value="UniProtKB-KW"/>
</dbReference>
<dbReference type="GO" id="GO:0046718">
    <property type="term" value="P:symbiont entry into host cell"/>
    <property type="evidence" value="ECO:0007669"/>
    <property type="project" value="UniProtKB-KW"/>
</dbReference>
<dbReference type="GO" id="GO:0052150">
    <property type="term" value="P:symbiont-mediated perturbation of host apoptosis"/>
    <property type="evidence" value="ECO:0007669"/>
    <property type="project" value="UniProtKB-KW"/>
</dbReference>
<dbReference type="GO" id="GO:0033668">
    <property type="term" value="P:symbiont-mediated suppression of host apoptosis"/>
    <property type="evidence" value="ECO:0000314"/>
    <property type="project" value="UniProtKB"/>
</dbReference>
<dbReference type="DisProt" id="DP02493"/>
<dbReference type="Gene3D" id="2.60.40.3770">
    <property type="match status" value="1"/>
</dbReference>
<dbReference type="Gene3D" id="2.60.98.50">
    <property type="match status" value="3"/>
</dbReference>
<dbReference type="InterPro" id="IPR016404">
    <property type="entry name" value="M_polyprot_prcur_phlebovir"/>
</dbReference>
<dbReference type="InterPro" id="IPR043603">
    <property type="entry name" value="Phlebo_G2_C"/>
</dbReference>
<dbReference type="InterPro" id="IPR010826">
    <property type="entry name" value="Phlebovirus_G1"/>
</dbReference>
<dbReference type="InterPro" id="IPR009878">
    <property type="entry name" value="Phlebovirus_G2_fusion"/>
</dbReference>
<dbReference type="InterPro" id="IPR009879">
    <property type="entry name" value="Phlebovirus_NSM"/>
</dbReference>
<dbReference type="Pfam" id="PF19019">
    <property type="entry name" value="Phlebo_G2_C"/>
    <property type="match status" value="1"/>
</dbReference>
<dbReference type="Pfam" id="PF07243">
    <property type="entry name" value="Phlebovirus_G1"/>
    <property type="match status" value="1"/>
</dbReference>
<dbReference type="Pfam" id="PF07245">
    <property type="entry name" value="Phlebovirus_G2"/>
    <property type="match status" value="1"/>
</dbReference>
<dbReference type="Pfam" id="PF07246">
    <property type="entry name" value="Phlebovirus_NSM"/>
    <property type="match status" value="2"/>
</dbReference>
<dbReference type="PIRSF" id="PIRSF003961">
    <property type="entry name" value="M_poly_PhleboV"/>
    <property type="match status" value="1"/>
</dbReference>
<comment type="function">
    <molecule>Glycoprotein N</molecule>
    <text evidence="7 8 9 14">Structural component of the virion that interacts with glycoprotein C (PubMed:18715915). It shields the hydrophobic fusion loops of the glycoprotein C, preventing premature fusion (PubMed:29367607). The glycoprotein protrusions are arranged on an icosahedral lattice, with T=12 triangulation (PubMed:18715915, PubMed:29367607). They are able to attach the virion to the host cell receptor CD209/DC-SIGN and to promote fusion of membranes with the late endosome after endocytosis of the virion (PubMed:21767814). Plays a role in the packaging of ribonucleoproteins and polymerase during virus assembly (PubMed:21445316).</text>
</comment>
<comment type="function">
    <molecule>Glycoprotein C</molecule>
    <text evidence="7 9 14">Structural component of the virion that interacts with glycoprotein N (PubMed:18715915). Acts as a class II fusion protein that is activated upon acidification and subsequent repositioning of the glycoprotein N (PubMed:29367607). The glycoprotein protrusions are arranged on an icosahedral lattice, with T=12 triangulation (PubMed:18715915, PubMed:29367607). They are able to attach the virion to the host cell receptor CD209/DC-SIGN and to promote fusion of membranes with the late endosome after endocytosis of the virion (PubMed:21767814).</text>
</comment>
<comment type="function">
    <molecule>Isoform NSm protein</molecule>
    <text evidence="10 12">Plays a role in the inhibition of virus-induced apoptosis. Plays a role for virus dissemination in vertebrates.</text>
</comment>
<comment type="function">
    <molecule>NSm-Gn protein</molecule>
    <text evidence="11 12">Plays a role for virus dissemination in mosquitoes. May act as a structural virion protein in insects.</text>
</comment>
<comment type="subunit">
    <molecule>Glycoprotein N</molecule>
    <text evidence="1 2 8 16 17">Heterodimer with glycoprotein C (By similarity). Homotrimer (postfusion) (By similarity). Interacts with nucleocapsid protein N and with the polymerase L in order to package them into virus particles (PubMed:21445316). Interacts with host E3 ubiquitin-protein ligase UBR4; this interaction is important for viral RNA production (PubMed:35032865). Interacts with host LRP1; this interaction facilitates virus entry into the host cell (PubMed:34559985).</text>
</comment>
<comment type="subunit">
    <molecule>Glycoprotein C</molecule>
    <text evidence="2">Heterodimer with glycoprotein C.</text>
</comment>
<comment type="subcellular location">
    <molecule>Glycoprotein N</molecule>
    <subcellularLocation>
        <location evidence="2">Virion membrane</location>
        <topology evidence="2">Single-pass type I membrane protein</topology>
    </subcellularLocation>
    <subcellularLocation>
        <location evidence="5 8">Host Golgi apparatus membrane</location>
        <topology evidence="2">Single-pass type I membrane protein</topology>
    </subcellularLocation>
    <subcellularLocation>
        <location evidence="2">Host endoplasmic reticulum membrane</location>
        <topology evidence="2">Single-pass type I membrane protein</topology>
    </subcellularLocation>
    <text evidence="2">Interaction between Glycoprotein N and Glycoprotein C is essential for proper targeting of Glycoprotein C to the Golgi complex, where virion budding occurs.</text>
</comment>
<comment type="subcellular location">
    <molecule>Glycoprotein C</molecule>
    <subcellularLocation>
        <location evidence="2">Virion membrane</location>
        <topology evidence="2">Single-pass type I membrane protein</topology>
    </subcellularLocation>
    <subcellularLocation>
        <location evidence="5">Host Golgi apparatus membrane</location>
        <topology evidence="2">Single-pass type I membrane protein</topology>
    </subcellularLocation>
    <text evidence="2">Interaction between Glycoprotein N and Glycoprotein C is essential for proper targeting of Glycoprotein C to the Golgi complex, where virion budding occurs.</text>
</comment>
<comment type="subcellular location">
    <molecule>Isoform NSm protein</molecule>
    <subcellularLocation>
        <location evidence="10">Host mitochondrion outer membrane</location>
        <topology evidence="20">Single-pass type II membrane protein</topology>
    </subcellularLocation>
</comment>
<comment type="subcellular location">
    <molecule>NSm-Gn protein</molecule>
    <subcellularLocation>
        <location evidence="15">Host Golgi apparatus</location>
    </subcellularLocation>
    <subcellularLocation>
        <location evidence="11">Virion</location>
    </subcellularLocation>
    <text evidence="11">Localizes in virions maturing in cells of insect origin but not in cells of mammalian origin.</text>
</comment>
<comment type="alternative products">
    <event type="alternative initiation"/>
    <isoform>
        <id>P21401-1</id>
        <name>Envelopment polyprotein</name>
        <sequence type="displayed"/>
    </isoform>
    <isoform>
        <id>P21401-3</id>
        <name evidence="19">NSm protein</name>
        <name>P14</name>
        <sequence type="described" ref="VSP_057989 VSP_057990"/>
    </isoform>
    <isoform>
        <id>P21401-5</id>
        <name evidence="19">NSm' protein</name>
        <name>P13</name>
        <sequence type="described" ref="VSP_057988 VSP_057990"/>
    </isoform>
</comment>
<comment type="domain">
    <molecule>Glycoprotein N</molecule>
    <text evidence="2">Contains a Golgi retention signal on its C-terminus (By similarity). The cytoplasmic tail specifically interacts with the ribonucleoproteins and is critical for genome packaging (By similarity).</text>
</comment>
<comment type="PTM">
    <molecule>Envelopment polyprotein</molecule>
    <text evidence="6">Specific enzymatic cleavages in vivo yield mature proteins including NSm protein, Glycoprotein C, and Glycoprotein N.</text>
</comment>
<comment type="PTM">
    <molecule>Glycoprotein N</molecule>
    <text evidence="9 13">Glycosylated (PubMed:2728348). The glycans can attach to host CD209/DC-SIGN, and may play a role in virus entry into dendritic cells (PubMed:21767814).</text>
</comment>
<comment type="PTM">
    <molecule>Glycoprotein C</molecule>
    <text evidence="9 13">Glycosylated (PubMed:2728348). The glycans can attach to host CD209/DC-SIGN, and may play a role in virus entry into dendritic cells (PubMed:21767814).</text>
</comment>
<comment type="PTM">
    <molecule>Glycoprotein C</molecule>
    <text evidence="2">Palmitoylated.</text>
</comment>
<comment type="similarity">
    <text evidence="21">Belongs to the phlebovirus envelope glycoprotein family.</text>
</comment>
<feature type="signal peptide" evidence="4">
    <location>
        <begin position="1"/>
        <end position="16"/>
    </location>
</feature>
<feature type="chain" id="PRO_0000247010" description="Envelopment polyprotein">
    <location>
        <begin position="17"/>
        <end position="1197"/>
    </location>
</feature>
<feature type="chain" id="PRO_0000434914" description="NSm-Gn protein">
    <location>
        <begin position="17"/>
        <end position="690"/>
    </location>
</feature>
<feature type="chain" id="PRO_0000036851" description="Glycoprotein N" evidence="4">
    <location>
        <begin position="154"/>
        <end position="690"/>
    </location>
</feature>
<feature type="chain" id="PRO_0000036852" description="Glycoprotein C" evidence="4">
    <location>
        <begin position="691"/>
        <end position="1197"/>
    </location>
</feature>
<feature type="topological domain" description="Cytoplasmic" evidence="18">
    <location>
        <begin position="17"/>
        <end position="130"/>
    </location>
</feature>
<feature type="topological domain" description="Lumenal" evidence="4">
    <location>
        <begin position="154"/>
        <end position="582"/>
    </location>
</feature>
<feature type="transmembrane region" description="Helical" evidence="4">
    <location>
        <begin position="583"/>
        <end position="603"/>
    </location>
</feature>
<feature type="topological domain" description="Cytoplasmic" evidence="2">
    <location>
        <begin position="604"/>
        <end position="673"/>
    </location>
</feature>
<feature type="topological domain" description="Lumenal" evidence="4">
    <location>
        <begin position="691"/>
        <end position="1159"/>
    </location>
</feature>
<feature type="transmembrane region" description="Helical" evidence="4">
    <location>
        <begin position="1160"/>
        <end position="1180"/>
    </location>
</feature>
<feature type="topological domain" description="Cytoplasmic" evidence="2">
    <location>
        <begin position="1181"/>
        <end position="1197"/>
    </location>
</feature>
<feature type="region of interest" description="Internal signal sequence for glycoprotein N" evidence="18">
    <location>
        <begin position="131"/>
        <end position="153"/>
    </location>
</feature>
<feature type="region of interest" description="Golgi retention signal" evidence="2">
    <location>
        <begin position="608"/>
        <end position="650"/>
    </location>
</feature>
<feature type="region of interest" description="Important for correct targeting of the glycoproteins to the Golgi complex but not for heterodimerization" evidence="2">
    <location>
        <begin position="646"/>
        <end position="650"/>
    </location>
</feature>
<feature type="region of interest" description="Internal signal sequence for glycoprotein C" evidence="2">
    <location>
        <begin position="675"/>
        <end position="690"/>
    </location>
</feature>
<feature type="region of interest" description="Fusion loop" evidence="3">
    <location>
        <begin position="777"/>
        <end position="783"/>
    </location>
</feature>
<feature type="region of interest" description="Fusion loop" evidence="14">
    <location>
        <begin position="819"/>
        <end position="830"/>
    </location>
</feature>
<feature type="site" description="Cleavage; by host signal peptidase" evidence="6">
    <location>
        <begin position="153"/>
        <end position="154"/>
    </location>
</feature>
<feature type="site" description="Cleavage; by host signal peptidase" evidence="6">
    <location>
        <begin position="690"/>
        <end position="691"/>
    </location>
</feature>
<feature type="site" description="Important for glycoprotein C and glycoprotein N subcellular location" evidence="2">
    <location>
        <position position="1194"/>
    </location>
</feature>
<feature type="glycosylation site" description="N-linked (GlcNAc...) asparagine; by host" evidence="1">
    <location>
        <position position="794"/>
    </location>
</feature>
<feature type="glycosylation site" description="N-linked (GlcNAc...) asparagine; by host" evidence="1">
    <location>
        <position position="1035"/>
    </location>
</feature>
<feature type="glycosylation site" description="N-linked (GlcNAc...) asparagine; by host" evidence="4">
    <location>
        <position position="1077"/>
    </location>
</feature>
<feature type="disulfide bond" evidence="1">
    <location>
        <begin position="179"/>
        <end position="188"/>
    </location>
</feature>
<feature type="disulfide bond" evidence="1">
    <location>
        <begin position="229"/>
        <end position="239"/>
    </location>
</feature>
<feature type="disulfide bond" evidence="1">
    <location>
        <begin position="250"/>
        <end position="281"/>
    </location>
</feature>
<feature type="disulfide bond" evidence="1">
    <location>
        <begin position="271"/>
        <end position="284"/>
    </location>
</feature>
<feature type="disulfide bond" evidence="1">
    <location>
        <begin position="304"/>
        <end position="456"/>
    </location>
</feature>
<feature type="disulfide bond" evidence="1">
    <location>
        <begin position="322"/>
        <end position="332"/>
    </location>
</feature>
<feature type="disulfide bond" evidence="1">
    <location>
        <begin position="374"/>
        <end position="434"/>
    </location>
</feature>
<feature type="disulfide bond" evidence="1">
    <location>
        <begin position="402"/>
        <end position="413"/>
    </location>
</feature>
<feature type="disulfide bond" evidence="1">
    <location>
        <begin position="420"/>
        <end position="425"/>
    </location>
</feature>
<feature type="disulfide bond" evidence="1">
    <location>
        <begin position="479"/>
        <end position="482"/>
    </location>
</feature>
<feature type="disulfide bond" evidence="1">
    <location>
        <begin position="486"/>
        <end position="556"/>
    </location>
</feature>
<feature type="disulfide bond" evidence="1">
    <location>
        <begin position="506"/>
        <end position="511"/>
    </location>
</feature>
<feature type="disulfide bond" evidence="14">
    <location>
        <begin position="691"/>
        <end position="731"/>
    </location>
</feature>
<feature type="disulfide bond" evidence="14">
    <location>
        <begin position="704"/>
        <end position="713"/>
    </location>
</feature>
<feature type="disulfide bond" evidence="14">
    <location>
        <begin position="756"/>
        <end position="852"/>
    </location>
</feature>
<feature type="disulfide bond" evidence="14">
    <location>
        <begin position="771"/>
        <end position="965"/>
    </location>
</feature>
<feature type="disulfide bond" evidence="14">
    <location>
        <begin position="777"/>
        <end position="825"/>
    </location>
</feature>
<feature type="disulfide bond" evidence="14">
    <location>
        <begin position="783"/>
        <end position="832"/>
    </location>
</feature>
<feature type="disulfide bond" evidence="14">
    <location>
        <begin position="788"/>
        <end position="814"/>
    </location>
</feature>
<feature type="disulfide bond" evidence="14">
    <location>
        <begin position="818"/>
        <end position="823"/>
    </location>
</feature>
<feature type="disulfide bond" evidence="14">
    <location>
        <begin position="934"/>
        <end position="947"/>
    </location>
</feature>
<feature type="disulfide bond" evidence="14">
    <location>
        <begin position="1029"/>
        <end position="1101"/>
    </location>
</feature>
<feature type="disulfide bond" evidence="14">
    <location>
        <begin position="1039"/>
        <end position="1042"/>
    </location>
</feature>
<feature type="disulfide bond" evidence="14">
    <location>
        <begin position="1049"/>
        <end position="1083"/>
    </location>
</feature>
<feature type="splice variant" id="VSP_057988" description="In isoform NSm' protein.">
    <location>
        <begin position="1"/>
        <end position="51"/>
    </location>
</feature>
<feature type="splice variant" id="VSP_057989" description="In isoform NSm protein.">
    <location>
        <begin position="1"/>
        <end position="38"/>
    </location>
</feature>
<feature type="splice variant" id="VSP_057990" description="In isoform NSm protein and isoform NSm' protein.">
    <location>
        <begin position="154"/>
        <end position="1197"/>
    </location>
</feature>
<feature type="sequence conflict" description="In Ref. 2; ABD38819." evidence="21" ref="2">
    <original>T</original>
    <variation>I</variation>
    <location>
        <position position="9"/>
    </location>
</feature>
<feature type="sequence conflict" description="In Ref. 2; ABD38819." evidence="21" ref="2">
    <original>I</original>
    <variation>V</variation>
    <location>
        <position position="17"/>
    </location>
</feature>
<feature type="sequence conflict" description="In Ref. 2; ABD38819." evidence="21" ref="2">
    <original>K</original>
    <variation>E</variation>
    <location>
        <position position="129"/>
    </location>
</feature>
<feature type="sequence conflict" description="In Ref. 2; ABD38819." evidence="21" ref="2">
    <original>H</original>
    <variation>Y</variation>
    <location>
        <position position="259"/>
    </location>
</feature>
<feature type="sequence conflict" description="In Ref. 2; ABD38819." evidence="21" ref="2">
    <original>L</original>
    <variation>I</variation>
    <location>
        <position position="747"/>
    </location>
</feature>
<feature type="sequence conflict" description="In Ref. 2; ABD38819." evidence="21" ref="2">
    <original>G</original>
    <variation>R</variation>
    <location>
        <position position="1182"/>
    </location>
</feature>
<feature type="turn" evidence="29">
    <location>
        <begin position="156"/>
        <end position="159"/>
    </location>
</feature>
<feature type="helix" evidence="29">
    <location>
        <begin position="176"/>
        <end position="179"/>
    </location>
</feature>
<feature type="strand" evidence="29">
    <location>
        <begin position="184"/>
        <end position="186"/>
    </location>
</feature>
<feature type="turn" evidence="29">
    <location>
        <begin position="189"/>
        <end position="191"/>
    </location>
</feature>
<feature type="helix" evidence="29">
    <location>
        <begin position="192"/>
        <end position="195"/>
    </location>
</feature>
<feature type="turn" evidence="29">
    <location>
        <begin position="197"/>
        <end position="199"/>
    </location>
</feature>
<feature type="helix" evidence="29">
    <location>
        <begin position="201"/>
        <end position="205"/>
    </location>
</feature>
<feature type="turn" evidence="29">
    <location>
        <begin position="206"/>
        <end position="208"/>
    </location>
</feature>
<feature type="helix" evidence="29">
    <location>
        <begin position="212"/>
        <end position="217"/>
    </location>
</feature>
<feature type="strand" evidence="29">
    <location>
        <begin position="225"/>
        <end position="230"/>
    </location>
</feature>
<feature type="helix" evidence="29">
    <location>
        <begin position="240"/>
        <end position="244"/>
    </location>
</feature>
<feature type="strand" evidence="29">
    <location>
        <begin position="255"/>
        <end position="260"/>
    </location>
</feature>
<feature type="strand" evidence="29">
    <location>
        <begin position="264"/>
        <end position="270"/>
    </location>
</feature>
<feature type="strand" evidence="29">
    <location>
        <begin position="275"/>
        <end position="277"/>
    </location>
</feature>
<feature type="strand" evidence="29">
    <location>
        <begin position="284"/>
        <end position="286"/>
    </location>
</feature>
<feature type="strand" evidence="29">
    <location>
        <begin position="300"/>
        <end position="304"/>
    </location>
</feature>
<feature type="strand" evidence="29">
    <location>
        <begin position="321"/>
        <end position="324"/>
    </location>
</feature>
<feature type="strand" evidence="29">
    <location>
        <begin position="334"/>
        <end position="347"/>
    </location>
</feature>
<feature type="strand" evidence="29">
    <location>
        <begin position="361"/>
        <end position="364"/>
    </location>
</feature>
<feature type="helix" evidence="29">
    <location>
        <begin position="369"/>
        <end position="371"/>
    </location>
</feature>
<feature type="strand" evidence="29">
    <location>
        <begin position="372"/>
        <end position="377"/>
    </location>
</feature>
<feature type="strand" evidence="29">
    <location>
        <begin position="394"/>
        <end position="397"/>
    </location>
</feature>
<feature type="helix" evidence="29">
    <location>
        <begin position="399"/>
        <end position="401"/>
    </location>
</feature>
<feature type="strand" evidence="29">
    <location>
        <begin position="413"/>
        <end position="415"/>
    </location>
</feature>
<feature type="helix" evidence="29">
    <location>
        <begin position="417"/>
        <end position="422"/>
    </location>
</feature>
<feature type="helix" evidence="29">
    <location>
        <begin position="427"/>
        <end position="429"/>
    </location>
</feature>
<feature type="strand" evidence="29">
    <location>
        <begin position="431"/>
        <end position="436"/>
    </location>
</feature>
<feature type="strand" evidence="29">
    <location>
        <begin position="441"/>
        <end position="447"/>
    </location>
</feature>
<feature type="strand" evidence="29">
    <location>
        <begin position="450"/>
        <end position="452"/>
    </location>
</feature>
<feature type="strand" evidence="29">
    <location>
        <begin position="455"/>
        <end position="469"/>
    </location>
</feature>
<organism>
    <name type="scientific">Rift valley fever virus (strain ZH-548 M12)</name>
    <name type="common">RVFV</name>
    <dbReference type="NCBI Taxonomy" id="11589"/>
    <lineage>
        <taxon>Viruses</taxon>
        <taxon>Riboviria</taxon>
        <taxon>Orthornavirae</taxon>
        <taxon>Negarnaviricota</taxon>
        <taxon>Polyploviricotina</taxon>
        <taxon>Ellioviricetes</taxon>
        <taxon>Bunyavirales</taxon>
        <taxon>Phenuiviridae</taxon>
        <taxon>Phlebovirus</taxon>
        <taxon>Phlebovirus riftense</taxon>
    </lineage>
</organism>
<reference key="1">
    <citation type="journal article" date="1989" name="Virology">
        <title>Identification of mutations in the M RNA of a candidate vaccine strain of Rift Valley fever virus.</title>
        <authorList>
            <person name="Takehara K."/>
            <person name="Min M.K."/>
            <person name="Battles J.K."/>
            <person name="Sugiyama K."/>
            <person name="Emery V.C."/>
            <person name="Dalrymple J.M."/>
            <person name="Bishop D.H.L."/>
        </authorList>
    </citation>
    <scope>NUCLEOTIDE SEQUENCE [GENOMIC RNA]</scope>
</reference>
<reference key="2">
    <citation type="journal article" date="2007" name="J. Virol.">
        <title>Complete genome analysis of 33 ecologically and biologically diverse Rift Valley fever virus strains reveals widespread virus movement and low genetic diversity due to recent common ancestry.</title>
        <authorList>
            <person name="Bird B.H."/>
            <person name="Khristova M.L."/>
            <person name="Rollin P.E."/>
            <person name="Ksiazek T.G."/>
            <person name="Nichol S.T."/>
        </authorList>
    </citation>
    <scope>NUCLEOTIDE SEQUENCE [LARGE SCALE GENOMIC DNA]</scope>
</reference>
<reference key="3">
    <citation type="journal article" date="1988" name="Virology">
        <title>Rift Valley fever virus M segment: cellular localization of M segment-encoded proteins.</title>
        <authorList>
            <person name="Wasmoen T.L."/>
            <person name="Kakach L.T."/>
            <person name="Collett M.S."/>
        </authorList>
    </citation>
    <scope>SUBCELLULAR LOCATION (NSM-GN PROTEIN)</scope>
</reference>
<reference key="4">
    <citation type="journal article" date="1989" name="Virology">
        <title>Rift Valley fever virus M segment: phlebovirus expression strategy and protein glycosylation.</title>
        <authorList>
            <person name="Kakach L.T."/>
            <person name="Suzich J.A."/>
            <person name="Collett M.S."/>
        </authorList>
    </citation>
    <scope>GLYCOSYLATION (GLYCOPROTEIN N)</scope>
    <scope>GLYCOSYLATION (GLYCOPROTEIN D)</scope>
</reference>
<reference key="5">
    <citation type="journal article" date="2002" name="J. Virol.">
        <title>Characterization of the Golgi retention motif of Rift Valley fever virus G(N) glycoprotein.</title>
        <authorList>
            <person name="Gerrard S.R."/>
            <person name="Nichol S.T."/>
        </authorList>
    </citation>
    <scope>SUBCELLULAR LOCATION (GLYCOPROTEIN N)</scope>
    <scope>SUBCELLULAR LOCATION (GLYCOPROTEIN C)</scope>
</reference>
<reference key="6">
    <citation type="journal article" date="2007" name="Virology">
        <title>Synthesis, proteolytic processing and complex formation of N-terminally nested precursor proteins of the Rift Valley fever virus glycoproteins.</title>
        <authorList>
            <person name="Gerrard S.R."/>
            <person name="Nichol S.T."/>
        </authorList>
    </citation>
    <scope>PROTEOLYTIC CLEAVAGE (ENVELOPMENT POLYPROTEIN)</scope>
</reference>
<reference key="7">
    <citation type="journal article" date="2008" name="J. Virol.">
        <title>Three-dimensional organization of Rift Valley fever virus revealed by cryoelectron tomography.</title>
        <authorList>
            <person name="Freiberg A.N."/>
            <person name="Sherman M.B."/>
            <person name="Morais M.C."/>
            <person name="Holbrook M.R."/>
            <person name="Watowich S.J."/>
        </authorList>
    </citation>
    <scope>STRUCTURE BY ELECTRON CRYOMICROSCOPY OF THE VIRAL PARTICLE</scope>
    <scope>FUNCTION (GLYCOPROTEIN N)</scope>
    <scope>FUNCTION (GLYCOPROTEIN C)</scope>
</reference>
<reference key="8">
    <citation type="journal article" date="2011" name="PLoS ONE">
        <title>Efficient cellular release of Rift Valley fever virus requires genomic RNA.</title>
        <authorList>
            <person name="Piper M.E."/>
            <person name="Sorenson D.R."/>
            <person name="Gerrard S.R."/>
        </authorList>
    </citation>
    <scope>INTERACTION WITH PROTEIN N AND POLYMERASE L (GLYCOPROTEIN N)</scope>
    <scope>FUNCTION (GLYCOPROTEIN N)</scope>
    <scope>SUBCELLULAR LOCATION (GLYCOPROTEIN N)</scope>
</reference>
<reference key="9">
    <citation type="journal article" date="2011" name="Cell Host Microbe">
        <title>DC-SIGN as a receptor for phleboviruses.</title>
        <authorList>
            <person name="Lozach P.Y."/>
            <person name="Kuehbacher A."/>
            <person name="Meier R."/>
            <person name="Mancini R."/>
            <person name="Bitto D."/>
            <person name="Bouloy M."/>
            <person name="Helenius A."/>
        </authorList>
    </citation>
    <scope>GLYCOSYLATION (GLYCOPROTEIN N)</scope>
    <scope>GLYCOSYLATION (GLYCOPROTEIN C)</scope>
    <scope>FUNCTION (GLYCOPROTEIN N)</scope>
    <scope>FUNCTION (GLYCOPROTEIN C)</scope>
</reference>
<reference key="10">
    <citation type="journal article" date="2012" name="Antiviral Res.">
        <title>Molecular biology and genetic diversity of Rift Valley fever virus.</title>
        <authorList>
            <person name="Ikegami T."/>
        </authorList>
    </citation>
    <scope>REVIEW</scope>
</reference>
<reference key="11">
    <citation type="journal article" date="2013" name="J. Virol.">
        <title>The C-terminal region of Rift Valley fever virus NSm protein targets the protein to the mitochondrial outer membrane and exerts antiapoptotic function.</title>
        <authorList>
            <person name="Terasaki K."/>
            <person name="Won S."/>
            <person name="Makino S."/>
        </authorList>
    </citation>
    <scope>FUNCTION (ISOFORM NSM PROTEIN)</scope>
    <scope>SUBCELLULAR LOCATION (ISOFORM NSM PROTEIN)</scope>
</reference>
<reference key="12">
    <citation type="journal article" date="2014" name="Emerg. Microbes Infect.">
        <title>The Rift Valley fever accessory proteins NSm and P78/NSm-GN are distinct determinants of virus propagation in vertebrate and invertebrate hosts.</title>
        <authorList>
            <person name="Kreher F."/>
            <person name="Tamietti C."/>
            <person name="Gommet C."/>
            <person name="Guillemot L."/>
            <person name="Ermonval M."/>
            <person name="Failloux A.B."/>
            <person name="Panthier J.J."/>
            <person name="Bouloy M."/>
            <person name="Flamand M."/>
        </authorList>
    </citation>
    <scope>FUNCTION (ISOFORM NSM PROTEIN)</scope>
    <scope>FUNCTION (NSM-GN PROTEIN)</scope>
    <scope>ALTERNATIVE INITIATION</scope>
</reference>
<reference key="13">
    <citation type="journal article" date="2014" name="PLoS ONE">
        <title>Rift Valley fever virus incorporates the 78 kDa glycoprotein into virions matured in mosquito C6/36 cells.</title>
        <authorList>
            <person name="Weingartl H.M."/>
            <person name="Zhang S."/>
            <person name="Marszal P."/>
            <person name="McGreevy A."/>
            <person name="Burton L."/>
            <person name="Wilson W.C."/>
        </authorList>
    </citation>
    <scope>FUNCTION (NSM-GN PROTEIN)</scope>
    <scope>SUBCELLULAR LOCATION (NSM-GN PROTEIN)</scope>
    <source>
        <strain>ZH-501</strain>
    </source>
</reference>
<reference key="14">
    <citation type="journal article" date="2021" name="Cell">
        <title>Lrp1 is a host entry factor for Rift Valley fever virus.</title>
        <authorList>
            <person name="Ganaie S.S."/>
            <person name="Schwarz M.M."/>
            <person name="McMillen C.M."/>
            <person name="Price D.A."/>
            <person name="Feng A.X."/>
            <person name="Albe J.R."/>
            <person name="Wang W."/>
            <person name="Miersch S."/>
            <person name="Orvedahl A."/>
            <person name="Cole A.R."/>
            <person name="Sentmanat M.F."/>
            <person name="Mishra N."/>
            <person name="Boyles D.A."/>
            <person name="Koenig Z.T."/>
            <person name="Kujawa M.R."/>
            <person name="Demers M.A."/>
            <person name="Hoehl R.M."/>
            <person name="Moyle A.B."/>
            <person name="Wagner N.D."/>
            <person name="Stubbs S.H."/>
            <person name="Cardarelli L."/>
            <person name="Teyra J."/>
            <person name="McElroy A."/>
            <person name="Gross M.L."/>
            <person name="Whelan S.P.J."/>
            <person name="Doench J."/>
            <person name="Cui X."/>
            <person name="Brett T.J."/>
            <person name="Sidhu S.S."/>
            <person name="Virgin H.W."/>
            <person name="Egawa T."/>
            <person name="Leung D.W."/>
            <person name="Amarasinghe G.K."/>
            <person name="Hartman A.L."/>
        </authorList>
    </citation>
    <scope>INTERACTION WITH HOST LRP1</scope>
</reference>
<reference key="15">
    <citation type="journal article" date="2022" name="Virology">
        <title>Rift Valley fever virus Gn V5-epitope tagged virus enables identification of UBR4 as a Gn interacting protein that facilitates Rift Valley fever virus production.</title>
        <authorList>
            <person name="Bracci N."/>
            <person name="de la Fuente C."/>
            <person name="Saleem S."/>
            <person name="Pinkham C."/>
            <person name="Narayanan A."/>
            <person name="Garcia-Sastre A."/>
            <person name="Balaraman V."/>
            <person name="Richt J.A."/>
            <person name="Wilson W."/>
            <person name="Kehn-Hall K."/>
        </authorList>
    </citation>
    <scope>INTERACTION WITH HOST E3 UBIQUITIN-PROTEIN LIGASE UBR4 (GLYCOPROTEIN N)</scope>
    <source>
        <strain>MP12</strain>
        <strain>ZH548</strain>
    </source>
</reference>
<reference evidence="28" key="16">
    <citation type="journal article" date="2018" name="Cell Rep.">
        <title>A Protective Monoclonal Antibody Targets a Site of Vulnerability on the Surface of Rift Valley Fever Virus.</title>
        <authorList>
            <person name="Allen E.R."/>
            <person name="Krumm S.A."/>
            <person name="Raghwani J."/>
            <person name="Halldorsson S."/>
            <person name="Elliott A."/>
            <person name="Graham V.A."/>
            <person name="Koudriakova E."/>
            <person name="Harlos K."/>
            <person name="Wright D."/>
            <person name="Warimwe G.M."/>
            <person name="Brennan B."/>
            <person name="Huiskonen J.T."/>
            <person name="Dowall S.D."/>
            <person name="Elliott R.M."/>
            <person name="Pybus O.G."/>
            <person name="Burton D.R."/>
            <person name="Hewson R."/>
            <person name="Doores K.J."/>
            <person name="Bowden T.A."/>
        </authorList>
    </citation>
    <scope>X-RAY CRYSTALLOGRAPHY (1.98 ANGSTROMS) OF 154-469 IN COMPLEX WITH A NEUTRALIZING ANTIBODY</scope>
</reference>
<reference evidence="22 23 24 25 26 27" key="17">
    <citation type="journal article" date="2018" name="Nat. Commun.">
        <title>Shielding and activation of a viral membrane fusion protein.</title>
        <authorList>
            <person name="Halldorsson S."/>
            <person name="Li S."/>
            <person name="Li M."/>
            <person name="Harlos K."/>
            <person name="Bowden T.A."/>
            <person name="Huiskonen J.T."/>
        </authorList>
    </citation>
    <scope>X-RAY CRYSTALLOGRAPHY (1.60 ANGSTROMS) OF 154-469 AND 691-1118</scope>
    <scope>FUNCTION (GLYCOPROTEIN N)</scope>
    <scope>FUNCTION (GLYCOPROTEIN C)</scope>
    <scope>SUBUNIT (GLYCOPROTEIN N)</scope>
    <scope>SUBUNIT (GLYCOPROTEIN C)</scope>
    <scope>DISULFIDE BONDS</scope>
</reference>
<accession>P21401</accession>
<accession>A2T075</accession>
<sequence length="1197" mass="130805">MYVLLTILTSVLVCEAIIRVSLSSTREETCFGDSTNPEMIEGAWDSLREEEMPEELSCSISGIREVKTSSQELYRALKAIIAADGLNNITCHGKDPEDKISLIKGPPHKKRVGIVRCERRRDAKQIGRKTMAGIAMTVLPALAVFALAPVVFAEDPHLRNRPGKGHNYIDGMTQEDATCKPVTYAGACSSFDVLLEKGKFPLFQSYAHHRTLLEAVHDTIIAKADPPSCDLLSAHGNPCMKEKLVMKTHCPNDYQSAHHLNNDGKMASVKCPPKYELTEDCNFCRQMTGASLKKGSYPLQDLFCQSSEDDGSKLKTKMKGVCEVGVQALKKCDGQLSTAHEVVPFAVFKNSKKVYLDKLDLKTEENLLPDSFVCFEHKGQYKGTMDSGQTKRELKSFDISQCPKIGGHGSKKCTGDAAFCSAYECTAQYANAYCSHANGSGIVQIQVSGVWKKPLCVGYERVVVKRELSAKPIQRVEPCTTCITKCEPHGLVVRSTGFKISSAVACASGVCVTGSQSPSTEITLKYPGISQSSGGDIGVHMAHDDQSVSSKIVAHCPPQDPCLVHDCIVCAHGLINYQCHTALSAFVVVFVFSSIAIICLAILYRVLKCLKIAPRKVLNPLMWITAFIRWIYKKMVARVADNINQVNREIGWMEGGQLVLGNPAPIPRHAPIPRYSTYLMLLLIVSYASACSELIQASSRITTCSTEGVNTKCRLSGTALIRAGSVGAEACLMLKGVKEDQTKFLKLKTVSSELSCREGQSYWTGSFSPKCLSSRRCHLVGECHVNRCLSWRDNETSAEFSFVGESTTMRENKCFEQCGGWGCGCFNVNPSCLFVHTYLQSVRKEALRVFNCIDWVHKLTLEITDFDGSVSTIDLGASSSRFTNWGSVSLSLDAEGISGSNSFSFIESPGKGYAIVDEPFSEIPRQGFLGEIRCNSESSVLSAHESCLRAPNLISYKPMIDQLECTTNLIDPFVVFERGSLPQTRNDKTFAASKGNRGVQAFSKGSVQADLTLMFDNFEVDFVGAAVSCDAAFLNLTGCYSCNAGARVCLSITSTGTGSLSAHNKDGSLHIVLPSENGTKDQCQILHFTVPEVEEEFMYSCDGDERPLLVKGTLIAIDPFDDRREAGGESTVVNPKSGSWNFFDWFSGLMSWFGGPLKTILLICLYVALSIGLFFLLIYLGGTGLSKMWLAATKKAS</sequence>
<name>GP_RVFVZ</name>
<evidence type="ECO:0000250" key="1">
    <source>
        <dbReference type="UniProtKB" id="P03518"/>
    </source>
</evidence>
<evidence type="ECO:0000250" key="2">
    <source>
        <dbReference type="UniProtKB" id="P09613"/>
    </source>
</evidence>
<evidence type="ECO:0000250" key="3">
    <source>
        <dbReference type="UniProtKB" id="R4V2Q5"/>
    </source>
</evidence>
<evidence type="ECO:0000255" key="4"/>
<evidence type="ECO:0000269" key="5">
    <source>
    </source>
</evidence>
<evidence type="ECO:0000269" key="6">
    <source>
    </source>
</evidence>
<evidence type="ECO:0000269" key="7">
    <source>
    </source>
</evidence>
<evidence type="ECO:0000269" key="8">
    <source>
    </source>
</evidence>
<evidence type="ECO:0000269" key="9">
    <source>
    </source>
</evidence>
<evidence type="ECO:0000269" key="10">
    <source>
    </source>
</evidence>
<evidence type="ECO:0000269" key="11">
    <source>
    </source>
</evidence>
<evidence type="ECO:0000269" key="12">
    <source>
    </source>
</evidence>
<evidence type="ECO:0000269" key="13">
    <source>
    </source>
</evidence>
<evidence type="ECO:0000269" key="14">
    <source>
    </source>
</evidence>
<evidence type="ECO:0000269" key="15">
    <source>
    </source>
</evidence>
<evidence type="ECO:0000269" key="16">
    <source>
    </source>
</evidence>
<evidence type="ECO:0000269" key="17">
    <source>
    </source>
</evidence>
<evidence type="ECO:0000303" key="18">
    <source>
    </source>
</evidence>
<evidence type="ECO:0000303" key="19">
    <source>
    </source>
</evidence>
<evidence type="ECO:0000303" key="20">
    <source>
    </source>
</evidence>
<evidence type="ECO:0000305" key="21"/>
<evidence type="ECO:0007744" key="22">
    <source>
        <dbReference type="PDB" id="6F8P"/>
    </source>
</evidence>
<evidence type="ECO:0007744" key="23">
    <source>
        <dbReference type="PDB" id="6F9B"/>
    </source>
</evidence>
<evidence type="ECO:0007744" key="24">
    <source>
        <dbReference type="PDB" id="6F9C"/>
    </source>
</evidence>
<evidence type="ECO:0007744" key="25">
    <source>
        <dbReference type="PDB" id="6F9D"/>
    </source>
</evidence>
<evidence type="ECO:0007744" key="26">
    <source>
        <dbReference type="PDB" id="6F9E"/>
    </source>
</evidence>
<evidence type="ECO:0007744" key="27">
    <source>
        <dbReference type="PDB" id="6F9F"/>
    </source>
</evidence>
<evidence type="ECO:0007744" key="28">
    <source>
        <dbReference type="PDB" id="6I9I"/>
    </source>
</evidence>
<evidence type="ECO:0007829" key="29">
    <source>
        <dbReference type="PDB" id="6F8P"/>
    </source>
</evidence>
<proteinExistence type="evidence at protein level"/>
<organismHost>
    <name type="scientific">Aedes</name>
    <dbReference type="NCBI Taxonomy" id="7158"/>
</organismHost>
<organismHost>
    <name type="scientific">Bos taurus</name>
    <name type="common">Bovine</name>
    <dbReference type="NCBI Taxonomy" id="9913"/>
</organismHost>
<organismHost>
    <name type="scientific">Bos taurus x Bison bison</name>
    <name type="common">beefalo</name>
    <dbReference type="NCBI Taxonomy" id="297284"/>
</organismHost>
<organismHost>
    <name type="scientific">Camelus bactrianus</name>
    <name type="common">Bactrian camel</name>
    <dbReference type="NCBI Taxonomy" id="9837"/>
</organismHost>
<organismHost>
    <name type="scientific">Capra hircus</name>
    <name type="common">Goat</name>
    <dbReference type="NCBI Taxonomy" id="9925"/>
</organismHost>
<organismHost>
    <name type="scientific">Homo sapiens</name>
    <name type="common">Human</name>
    <dbReference type="NCBI Taxonomy" id="9606"/>
</organismHost>
<organismHost>
    <name type="scientific">Ovis aries</name>
    <name type="common">Sheep</name>
    <dbReference type="NCBI Taxonomy" id="9940"/>
</organismHost>
<organismHost>
    <name type="scientific">Phlebotomus papatasi</name>
    <name type="common">Sandfly</name>
    <dbReference type="NCBI Taxonomy" id="29031"/>
</organismHost>
<gene>
    <name type="primary">GP</name>
</gene>